<sequence length="99" mass="11354">MALTKAEMSEYLFDKLGLSKRDAKELVELFFEEIRRALENGEQVKLSGFGNFDLRDKNQRPGRNPKTGEDIPITARRVVTFRPGQKLKSRVENASPKDE</sequence>
<dbReference type="EMBL" id="AE005674">
    <property type="protein sequence ID" value="AAN43109.1"/>
    <property type="molecule type" value="Genomic_DNA"/>
</dbReference>
<dbReference type="EMBL" id="AE014073">
    <property type="protein sequence ID" value="AAP16999.1"/>
    <property type="molecule type" value="Genomic_DNA"/>
</dbReference>
<dbReference type="RefSeq" id="NP_707402.1">
    <property type="nucleotide sequence ID" value="NC_004337.2"/>
</dbReference>
<dbReference type="RefSeq" id="WP_001229265.1">
    <property type="nucleotide sequence ID" value="NZ_WPGW01000051.1"/>
</dbReference>
<dbReference type="SMR" id="P0A6Y0"/>
<dbReference type="STRING" id="198214.SF1519"/>
<dbReference type="PaxDb" id="198214-SF1519"/>
<dbReference type="GeneID" id="1024710"/>
<dbReference type="GeneID" id="93775925"/>
<dbReference type="KEGG" id="sfl:SF1519"/>
<dbReference type="KEGG" id="sfx:S1636"/>
<dbReference type="PATRIC" id="fig|198214.7.peg.1794"/>
<dbReference type="HOGENOM" id="CLU_105066_1_3_6"/>
<dbReference type="Proteomes" id="UP000001006">
    <property type="component" value="Chromosome"/>
</dbReference>
<dbReference type="Proteomes" id="UP000002673">
    <property type="component" value="Chromosome"/>
</dbReference>
<dbReference type="GO" id="GO:0005829">
    <property type="term" value="C:cytosol"/>
    <property type="evidence" value="ECO:0007669"/>
    <property type="project" value="TreeGrafter"/>
</dbReference>
<dbReference type="GO" id="GO:0003677">
    <property type="term" value="F:DNA binding"/>
    <property type="evidence" value="ECO:0007669"/>
    <property type="project" value="UniProtKB-UniRule"/>
</dbReference>
<dbReference type="GO" id="GO:0030527">
    <property type="term" value="F:structural constituent of chromatin"/>
    <property type="evidence" value="ECO:0007669"/>
    <property type="project" value="InterPro"/>
</dbReference>
<dbReference type="GO" id="GO:0006310">
    <property type="term" value="P:DNA recombination"/>
    <property type="evidence" value="ECO:0007669"/>
    <property type="project" value="UniProtKB-UniRule"/>
</dbReference>
<dbReference type="GO" id="GO:0009893">
    <property type="term" value="P:positive regulation of metabolic process"/>
    <property type="evidence" value="ECO:0007669"/>
    <property type="project" value="UniProtKB-ARBA"/>
</dbReference>
<dbReference type="GO" id="GO:0006355">
    <property type="term" value="P:regulation of DNA-templated transcription"/>
    <property type="evidence" value="ECO:0007669"/>
    <property type="project" value="UniProtKB-UniRule"/>
</dbReference>
<dbReference type="GO" id="GO:0006417">
    <property type="term" value="P:regulation of translation"/>
    <property type="evidence" value="ECO:0007669"/>
    <property type="project" value="UniProtKB-UniRule"/>
</dbReference>
<dbReference type="CDD" id="cd13835">
    <property type="entry name" value="IHF_A"/>
    <property type="match status" value="1"/>
</dbReference>
<dbReference type="FunFam" id="4.10.520.10:FF:000002">
    <property type="entry name" value="Integration host factor subunit alpha"/>
    <property type="match status" value="1"/>
</dbReference>
<dbReference type="Gene3D" id="4.10.520.10">
    <property type="entry name" value="IHF-like DNA-binding proteins"/>
    <property type="match status" value="1"/>
</dbReference>
<dbReference type="HAMAP" id="MF_00380">
    <property type="entry name" value="IHF_alpha"/>
    <property type="match status" value="1"/>
</dbReference>
<dbReference type="InterPro" id="IPR000119">
    <property type="entry name" value="Hist_DNA-bd"/>
</dbReference>
<dbReference type="InterPro" id="IPR020816">
    <property type="entry name" value="Histone-like_DNA-bd_CS"/>
</dbReference>
<dbReference type="InterPro" id="IPR010992">
    <property type="entry name" value="IHF-like_DNA-bd_dom_sf"/>
</dbReference>
<dbReference type="InterPro" id="IPR005684">
    <property type="entry name" value="IHF_alpha"/>
</dbReference>
<dbReference type="NCBIfam" id="TIGR00987">
    <property type="entry name" value="himA"/>
    <property type="match status" value="1"/>
</dbReference>
<dbReference type="NCBIfam" id="NF001401">
    <property type="entry name" value="PRK00285.1"/>
    <property type="match status" value="1"/>
</dbReference>
<dbReference type="PANTHER" id="PTHR33175">
    <property type="entry name" value="DNA-BINDING PROTEIN HU"/>
    <property type="match status" value="1"/>
</dbReference>
<dbReference type="PANTHER" id="PTHR33175:SF2">
    <property type="entry name" value="INTEGRATION HOST FACTOR SUBUNIT ALPHA"/>
    <property type="match status" value="1"/>
</dbReference>
<dbReference type="Pfam" id="PF00216">
    <property type="entry name" value="Bac_DNA_binding"/>
    <property type="match status" value="1"/>
</dbReference>
<dbReference type="PRINTS" id="PR01727">
    <property type="entry name" value="DNABINDINGHU"/>
</dbReference>
<dbReference type="SMART" id="SM00411">
    <property type="entry name" value="BHL"/>
    <property type="match status" value="1"/>
</dbReference>
<dbReference type="SUPFAM" id="SSF47729">
    <property type="entry name" value="IHF-like DNA-binding proteins"/>
    <property type="match status" value="1"/>
</dbReference>
<dbReference type="PROSITE" id="PS00045">
    <property type="entry name" value="HISTONE_LIKE"/>
    <property type="match status" value="1"/>
</dbReference>
<organism>
    <name type="scientific">Shigella flexneri</name>
    <dbReference type="NCBI Taxonomy" id="623"/>
    <lineage>
        <taxon>Bacteria</taxon>
        <taxon>Pseudomonadati</taxon>
        <taxon>Pseudomonadota</taxon>
        <taxon>Gammaproteobacteria</taxon>
        <taxon>Enterobacterales</taxon>
        <taxon>Enterobacteriaceae</taxon>
        <taxon>Shigella</taxon>
    </lineage>
</organism>
<protein>
    <recommendedName>
        <fullName>Integration host factor subunit alpha</fullName>
        <shortName>IHF-alpha</shortName>
    </recommendedName>
</protein>
<reference key="1">
    <citation type="journal article" date="2002" name="Nucleic Acids Res.">
        <title>Genome sequence of Shigella flexneri 2a: insights into pathogenicity through comparison with genomes of Escherichia coli K12 and O157.</title>
        <authorList>
            <person name="Jin Q."/>
            <person name="Yuan Z."/>
            <person name="Xu J."/>
            <person name="Wang Y."/>
            <person name="Shen Y."/>
            <person name="Lu W."/>
            <person name="Wang J."/>
            <person name="Liu H."/>
            <person name="Yang J."/>
            <person name="Yang F."/>
            <person name="Zhang X."/>
            <person name="Zhang J."/>
            <person name="Yang G."/>
            <person name="Wu H."/>
            <person name="Qu D."/>
            <person name="Dong J."/>
            <person name="Sun L."/>
            <person name="Xue Y."/>
            <person name="Zhao A."/>
            <person name="Gao Y."/>
            <person name="Zhu J."/>
            <person name="Kan B."/>
            <person name="Ding K."/>
            <person name="Chen S."/>
            <person name="Cheng H."/>
            <person name="Yao Z."/>
            <person name="He B."/>
            <person name="Chen R."/>
            <person name="Ma D."/>
            <person name="Qiang B."/>
            <person name="Wen Y."/>
            <person name="Hou Y."/>
            <person name="Yu J."/>
        </authorList>
    </citation>
    <scope>NUCLEOTIDE SEQUENCE [LARGE SCALE GENOMIC DNA]</scope>
    <source>
        <strain>301 / Serotype 2a</strain>
    </source>
</reference>
<reference key="2">
    <citation type="journal article" date="2003" name="Infect. Immun.">
        <title>Complete genome sequence and comparative genomics of Shigella flexneri serotype 2a strain 2457T.</title>
        <authorList>
            <person name="Wei J."/>
            <person name="Goldberg M.B."/>
            <person name="Burland V."/>
            <person name="Venkatesan M.M."/>
            <person name="Deng W."/>
            <person name="Fournier G."/>
            <person name="Mayhew G.F."/>
            <person name="Plunkett G. III"/>
            <person name="Rose D.J."/>
            <person name="Darling A."/>
            <person name="Mau B."/>
            <person name="Perna N.T."/>
            <person name="Payne S.M."/>
            <person name="Runyen-Janecky L.J."/>
            <person name="Zhou S."/>
            <person name="Schwartz D.C."/>
            <person name="Blattner F.R."/>
        </authorList>
    </citation>
    <scope>NUCLEOTIDE SEQUENCE [LARGE SCALE GENOMIC DNA]</scope>
    <source>
        <strain>ATCC 700930 / 2457T / Serotype 2a</strain>
    </source>
</reference>
<comment type="function">
    <text evidence="1">This protein is one of the two subunits of integration host factor, a specific DNA-binding protein that functions in genetic recombination as well as in transcriptional and translational control.</text>
</comment>
<comment type="subunit">
    <text evidence="1">Heterodimer of an alpha and a beta chain.</text>
</comment>
<comment type="similarity">
    <text evidence="3">Belongs to the bacterial histone-like protein family.</text>
</comment>
<accession>P0A6Y0</accession>
<accession>P06984</accession>
<gene>
    <name type="primary">ihfA</name>
    <name type="synonym">himA</name>
    <name type="ordered locus">SF1519</name>
    <name type="ordered locus">S1636</name>
</gene>
<name>IHFA_SHIFL</name>
<keyword id="KW-0233">DNA recombination</keyword>
<keyword id="KW-0238">DNA-binding</keyword>
<keyword id="KW-1185">Reference proteome</keyword>
<keyword id="KW-0804">Transcription</keyword>
<keyword id="KW-0805">Transcription regulation</keyword>
<keyword id="KW-0810">Translation regulation</keyword>
<feature type="chain" id="PRO_0000105028" description="Integration host factor subunit alpha">
    <location>
        <begin position="1"/>
        <end position="99"/>
    </location>
</feature>
<feature type="region of interest" description="Disordered" evidence="2">
    <location>
        <begin position="49"/>
        <end position="73"/>
    </location>
</feature>
<evidence type="ECO:0000250" key="1"/>
<evidence type="ECO:0000256" key="2">
    <source>
        <dbReference type="SAM" id="MobiDB-lite"/>
    </source>
</evidence>
<evidence type="ECO:0000305" key="3"/>
<proteinExistence type="inferred from homology"/>